<comment type="function">
    <text evidence="1 3 8 9">Involved in the catabolism of short chain fatty acids (SCFA) via the tricarboxylic acid (TCA)(acetyl degradation route) and probably via the 2-methylcitrate cycle I (propionate degradation route). Catalyzes the reversible isomerization of citrate to isocitrate via cis-aconitate (PubMed:20647021, PubMed:21984793). Could catalyze the hydration of 2-methyl-cis-aconitate to yield (2R,3S)-2-methylisocitrate. The apo form of AcnA functions as a RNA-binding regulatory protein (By similarity).</text>
</comment>
<comment type="catalytic activity">
    <reaction evidence="8">
        <text>citrate = D-threo-isocitrate</text>
        <dbReference type="Rhea" id="RHEA:10336"/>
        <dbReference type="ChEBI" id="CHEBI:15562"/>
        <dbReference type="ChEBI" id="CHEBI:16947"/>
        <dbReference type="EC" id="4.2.1.3"/>
    </reaction>
</comment>
<comment type="catalytic activity">
    <reaction evidence="3">
        <text>(2S,3R)-3-hydroxybutane-1,2,3-tricarboxylate = 2-methyl-cis-aconitate + H2O</text>
        <dbReference type="Rhea" id="RHEA:17941"/>
        <dbReference type="ChEBI" id="CHEBI:15377"/>
        <dbReference type="ChEBI" id="CHEBI:57429"/>
        <dbReference type="ChEBI" id="CHEBI:57872"/>
        <dbReference type="EC" id="4.2.1.99"/>
    </reaction>
</comment>
<comment type="cofactor">
    <cofactor evidence="8">
        <name>[4Fe-4S] cluster</name>
        <dbReference type="ChEBI" id="CHEBI:49883"/>
    </cofactor>
    <text evidence="8">Binds 1 [4Fe-4S] cluster per subunit.</text>
</comment>
<comment type="biophysicochemical properties">
    <kinetics>
        <KM evidence="8">18.5 uM for cis-aconitate (at pH 8)</KM>
        <KM evidence="8">480 uM for citrate (at pH 8)</KM>
        <KM evidence="8">552 uM for isocitrate (at pH 8)</KM>
        <Vmax evidence="8">11.2 umol/min/mg enzyme with citrate as substrate (at pH 8)</Vmax>
        <Vmax evidence="8">16.5 umol/min/mg enzyme with isocitrate as substrate (at pH 8)</Vmax>
        <Vmax evidence="8">40.6 umol/min/mg enzyme with cis-aconitate as substrate (at pH 8)</Vmax>
        <text evidence="8">kcat is 19.6 sec(-1) for aconitase activity with citrate as substrate (at pH 8). kcat is 28.9 sec(-1) for aconitase activity with isocitrate as substrate (at pH 8). kcat is 71 sec(-1) for aconitase activity with cis-aconitate as substrate (at pH 8).</text>
    </kinetics>
    <phDependence>
        <text evidence="8">Optimum pH is between 7.5 and 7.75.</text>
    </phDependence>
    <temperatureDependence>
        <text evidence="8">Optimum temperature is 50 degrees Celsius.</text>
    </temperatureDependence>
</comment>
<comment type="pathway">
    <text evidence="12">Carbohydrate metabolism; tricarboxylic acid cycle; isocitrate from oxaloacetate: step 2/2.</text>
</comment>
<comment type="pathway">
    <text evidence="12">Organic acid metabolism; propanoate degradation.</text>
</comment>
<comment type="subunit">
    <text evidence="8">Monomer.</text>
</comment>
<comment type="induction">
    <text evidence="5 6 7 9">Repressed by AcnR, RipA, GlxR and activated by RamA. Repression by RipA is part of iron homeostasis and serves to reduce the iron demand under iron limitation. The activation of acn transcription by RamA serves to allow the increased carbon flux through the TCA cycle during growth on acetate. GlxR is a global regulator that binds to the acn promoter and presumably represses its transcription in the presence of cyclic AMP (cAMP).</text>
</comment>
<comment type="disruption phenotype">
    <text evidence="9">Cells lacking this gene are glutamate auxotrophic in glucose minimal medium, show a strong growth defect, and secret large amounts of acetate. Deletion causes a strong selection pressure for secondary mutations within the gltA gene, which might be caused by a growth-inhibitory level of cytoplasmic citrate.</text>
</comment>
<comment type="similarity">
    <text evidence="11">Belongs to the aconitase/IPM isomerase family.</text>
</comment>
<comment type="sequence caution" evidence="11">
    <conflict type="erroneous initiation">
        <sequence resource="EMBL-CDS" id="BAB98933"/>
    </conflict>
    <text>Extended N-terminus.</text>
</comment>
<comment type="sequence caution" evidence="11">
    <conflict type="erroneous initiation">
        <sequence resource="EMBL-CDS" id="CAF21548"/>
    </conflict>
    <text>Extended N-terminus.</text>
</comment>
<organism>
    <name type="scientific">Corynebacterium glutamicum (strain ATCC 13032 / DSM 20300 / JCM 1318 / BCRC 11384 / CCUG 27702 / LMG 3730 / NBRC 12168 / NCIMB 10025 / NRRL B-2784 / 534)</name>
    <dbReference type="NCBI Taxonomy" id="196627"/>
    <lineage>
        <taxon>Bacteria</taxon>
        <taxon>Bacillati</taxon>
        <taxon>Actinomycetota</taxon>
        <taxon>Actinomycetes</taxon>
        <taxon>Mycobacteriales</taxon>
        <taxon>Corynebacteriaceae</taxon>
        <taxon>Corynebacterium</taxon>
    </lineage>
</organism>
<accession>Q8NQ98</accession>
<accession>Q6M550</accession>
<accession>Q9WXJ0</accession>
<feature type="chain" id="PRO_0000076657" description="Aconitate hydratase A">
    <location>
        <begin position="1"/>
        <end position="939"/>
    </location>
</feature>
<feature type="region of interest" description="Disordered" evidence="4">
    <location>
        <begin position="433"/>
        <end position="453"/>
    </location>
</feature>
<feature type="binding site" evidence="2">
    <location>
        <position position="475"/>
    </location>
    <ligand>
        <name>[4Fe-4S] cluster</name>
        <dbReference type="ChEBI" id="CHEBI:49883"/>
    </ligand>
</feature>
<feature type="binding site" evidence="2">
    <location>
        <position position="541"/>
    </location>
    <ligand>
        <name>[4Fe-4S] cluster</name>
        <dbReference type="ChEBI" id="CHEBI:49883"/>
    </ligand>
</feature>
<feature type="binding site" evidence="2">
    <location>
        <position position="544"/>
    </location>
    <ligand>
        <name>[4Fe-4S] cluster</name>
        <dbReference type="ChEBI" id="CHEBI:49883"/>
    </ligand>
</feature>
<feature type="sequence conflict" description="In Ref. 1; BAA76717." evidence="11" ref="1">
    <original>D</original>
    <variation>N</variation>
    <location>
        <position position="71"/>
    </location>
</feature>
<feature type="sequence conflict" description="In Ref. 1; BAA76717." evidence="11" ref="1">
    <original>M</original>
    <variation>V</variation>
    <location>
        <position position="122"/>
    </location>
</feature>
<feature type="sequence conflict" description="In Ref. 1; BAA76717." evidence="11" ref="1">
    <original>I</original>
    <variation>Y</variation>
    <location>
        <position position="555"/>
    </location>
</feature>
<feature type="sequence conflict" description="In Ref. 1; BAA76717." evidence="11" ref="1">
    <original>N</original>
    <variation>Y</variation>
    <location>
        <position position="745"/>
    </location>
</feature>
<feature type="sequence conflict" description="In Ref. 1; BAA76717." evidence="11" ref="1">
    <original>T</original>
    <variation>I</variation>
    <location>
        <position position="888"/>
    </location>
</feature>
<sequence>MTESKNSFNAKSTLEVGDKSYDYFALSAVPGMEKLPYSLKVLGENLLRTEDGANITNEHIEAIANWDASSDPSIEIQFTPARVLMQDFTGVPCVVDLATMREAVAALGGDPNDVNPLNPAEMVIDHSVIVEAFGRPDALAKNVEIEYERNEERYQFLRWGSESFSNFRVVPPGTGIVHQVNIEYLARVVFDNEGLAYPDTCIGTDSHTTMENGLGILGWGVGGIEAEAAMLGQPVSMLIPRVVGFKLTGEIPVGVTATDVVLTITEMLRDHGVVQKFVEFYGSGVKAVPLANRATIGNMSPEFGSTCAMFPIDEETTKYLRLTGRPEEQVALVEAYAKAQGMWLDEDTVEAEYSEYLELDLSTVVPSIAGPKRPQDRILLSEAKEQFRKDLPTYTDDAVSVDTSIPATRMVNEGGGQPEGGVEADNYNASWAGSGESLATGAEGRPSKPVTVASPQGGEYTIDHGMVAIASITSCTNTSNPSVMIGAGLIARKAAEKGLKSKPWVKTICAPGSQVVDGYYQRADLWKDLEAMGFYLSGFGCTTCIGNSGPLPEEISAAINEHDLTATAVLSGNRNFEGRISPDVKMNYLASPIMVIAYAIAGTMDFDFENEALGQDQDGNDVFLKDIWPSTEEIEDTIQQAISRELYEADYADVFKGDKQWQELDVPTGDTFEWDENSTYIRKAPYFDGMPVEPVAVTDIQGARVLAKLGDSVTTDHISPASSIKPGTPAAQYLDEHGVERHDYNSLGSRRGNHEVMMRGTFANIRLQNQLVDIAGGYTRDFTQEGAPQAFIYDASVNYKAAGIPLVVLGGKEYGTGSSRDWAAKGTNLLGIRAVITESFERIHRSNLIGMGVVPLQFPAGESHESLGLDGTETFDITGLTALNEGETPKTVKVTATKENGDVVEFDAVVRIDTPGEADYYRHGGILQYVLRQMAASSK</sequence>
<name>ACNA_CORGL</name>
<proteinExistence type="evidence at protein level"/>
<reference key="1">
    <citation type="submission" date="1999-03" db="EMBL/GenBank/DDBJ databases">
        <title>Brevibacterium lactofermentum ATCC 13869 acn gene for aconitase.</title>
        <authorList>
            <person name="Nakamura J."/>
            <person name="Kimura E."/>
            <person name="Oosumi T."/>
            <person name="Matsui K."/>
            <person name="Nakamatsu T."/>
        </authorList>
    </citation>
    <scope>NUCLEOTIDE SEQUENCE [GENOMIC DNA]</scope>
    <source>
        <strain>ATCC 13869 / DSMZ 1412 / NCIMB 9567</strain>
    </source>
</reference>
<reference key="2">
    <citation type="journal article" date="2003" name="Appl. Microbiol. Biotechnol.">
        <title>The Corynebacterium glutamicum genome: features and impacts on biotechnological processes.</title>
        <authorList>
            <person name="Ikeda M."/>
            <person name="Nakagawa S."/>
        </authorList>
    </citation>
    <scope>NUCLEOTIDE SEQUENCE [LARGE SCALE GENOMIC DNA]</scope>
    <source>
        <strain>ATCC 13032 / DSM 20300 / JCM 1318 / BCRC 11384 / CCUG 27702 / LMG 3730 / NBRC 12168 / NCIMB 10025 / NRRL B-2784 / 534</strain>
    </source>
</reference>
<reference key="3">
    <citation type="journal article" date="2003" name="J. Biotechnol.">
        <title>The complete Corynebacterium glutamicum ATCC 13032 genome sequence and its impact on the production of L-aspartate-derived amino acids and vitamins.</title>
        <authorList>
            <person name="Kalinowski J."/>
            <person name="Bathe B."/>
            <person name="Bartels D."/>
            <person name="Bischoff N."/>
            <person name="Bott M."/>
            <person name="Burkovski A."/>
            <person name="Dusch N."/>
            <person name="Eggeling L."/>
            <person name="Eikmanns B.J."/>
            <person name="Gaigalat L."/>
            <person name="Goesmann A."/>
            <person name="Hartmann M."/>
            <person name="Huthmacher K."/>
            <person name="Kraemer R."/>
            <person name="Linke B."/>
            <person name="McHardy A.C."/>
            <person name="Meyer F."/>
            <person name="Moeckel B."/>
            <person name="Pfefferle W."/>
            <person name="Puehler A."/>
            <person name="Rey D.A."/>
            <person name="Rueckert C."/>
            <person name="Rupp O."/>
            <person name="Sahm H."/>
            <person name="Wendisch V.F."/>
            <person name="Wiegraebe I."/>
            <person name="Tauch A."/>
        </authorList>
    </citation>
    <scope>NUCLEOTIDE SEQUENCE [LARGE SCALE GENOMIC DNA]</scope>
    <source>
        <strain>ATCC 13032 / DSM 20300 / JCM 1318 / BCRC 11384 / CCUG 27702 / LMG 3730 / NBRC 12168 / NCIMB 10025 / NRRL B-2784 / 534</strain>
    </source>
</reference>
<reference key="4">
    <citation type="journal article" date="2005" name="J. Biol. Chem.">
        <title>Identification of AcnR, a TetR-type repressor of the aconitase gene acn in Corynebacterium glutamicum.</title>
        <authorList>
            <person name="Krug A."/>
            <person name="Wendisch V.F."/>
            <person name="Bott M."/>
        </authorList>
    </citation>
    <scope>INDUCTION</scope>
</reference>
<reference key="5">
    <citation type="journal article" date="2005" name="J. Biol. Chem.">
        <title>The AraC-type regulator RipA represses aconitase and other iron proteins from Corynebacterium under iron limitation and is itself repressed by DtxR.</title>
        <authorList>
            <person name="Wennerhold J."/>
            <person name="Krug A."/>
            <person name="Bott M."/>
        </authorList>
    </citation>
    <scope>INDUCTION</scope>
    <source>
        <strain>ATCC 13032 / DSM 20300 / JCM 1318 / BCRC 11384 / CCUG 27702 / LMG 3730 / NBRC 12168 / NCIMB 10025 / NRRL B-2784 / 534</strain>
    </source>
</reference>
<reference key="6">
    <citation type="journal article" date="2008" name="Science">
        <title>Materials research society fall meeting. Protein chip promises cheaper diagnostics.</title>
        <authorList>
            <person name="Service R.F."/>
        </authorList>
    </citation>
    <scope>INDUCTION</scope>
</reference>
<reference key="7">
    <citation type="journal article" date="2011" name="J. Bacteriol.">
        <title>Deletion of the aconitase gene in Corynebacterium glutamicum causes strong selection pressure for secondary mutations inactivating citrate synthase.</title>
        <authorList>
            <person name="Baumgart M."/>
            <person name="Mustafi N."/>
            <person name="Krug A."/>
            <person name="Bott M."/>
        </authorList>
    </citation>
    <scope>FUNCTION</scope>
    <scope>DISRUPTION PHENOTYPE</scope>
    <scope>INDUCTION</scope>
    <source>
        <strain>ATCC 13032 / DSM 20300 / JCM 1318 / BCRC 11384 / CCUG 27702 / LMG 3730 / NBRC 12168 / NCIMB 10025 / NRRL B-2784 / 534</strain>
    </source>
</reference>
<reference key="8">
    <citation type="journal article" date="2011" name="J. Biotechnol.">
        <title>Biochemical characterisation of aconitase from Corynebacterium glutamicum.</title>
        <authorList>
            <person name="Baumgart M."/>
            <person name="Bott M."/>
        </authorList>
    </citation>
    <scope>FUNCTION</scope>
    <scope>CATALYTIC ACTIVITY</scope>
    <scope>BIOPHYSICOCHEMICAL PROPERTIES</scope>
    <scope>COFACTOR</scope>
    <scope>SUBUNIT</scope>
    <source>
        <strain>ATCC 13032 / DSM 20300 / JCM 1318 / BCRC 11384 / CCUG 27702 / LMG 3730 / NBRC 12168 / NCIMB 10025 / NRRL B-2784 / 534</strain>
    </source>
</reference>
<protein>
    <recommendedName>
        <fullName evidence="10">Aconitate hydratase A</fullName>
        <shortName evidence="10">ACN</shortName>
        <shortName evidence="10">Aconitase</shortName>
        <ecNumber evidence="8">4.2.1.3</ecNumber>
    </recommendedName>
    <alternativeName>
        <fullName evidence="3">(2R,3S)-2-methylisocitrate dehydratase</fullName>
    </alternativeName>
    <alternativeName>
        <fullName evidence="3">(2S,3R)-3-hydroxybutane-1,2,3-tricarboxylate dehydratase</fullName>
    </alternativeName>
    <alternativeName>
        <fullName evidence="1">Iron-responsive protein-like</fullName>
        <shortName evidence="1">IRP-like</shortName>
    </alternativeName>
    <alternativeName>
        <fullName evidence="3">Probable 2-methyl-cis-aconitate hydratase</fullName>
        <ecNumber evidence="3">4.2.1.99</ecNumber>
    </alternativeName>
    <alternativeName>
        <fullName evidence="1">RNA-binding protein</fullName>
    </alternativeName>
</protein>
<gene>
    <name type="primary">acn</name>
    <name type="ordered locus">Cgl1540</name>
    <name type="ordered locus">cg1737</name>
</gene>
<dbReference type="EC" id="4.2.1.3" evidence="8"/>
<dbReference type="EC" id="4.2.1.99" evidence="3"/>
<dbReference type="EMBL" id="AB025424">
    <property type="protein sequence ID" value="BAA76717.1"/>
    <property type="molecule type" value="Genomic_DNA"/>
</dbReference>
<dbReference type="EMBL" id="BA000036">
    <property type="protein sequence ID" value="BAB98933.1"/>
    <property type="status" value="ALT_INIT"/>
    <property type="molecule type" value="Genomic_DNA"/>
</dbReference>
<dbReference type="EMBL" id="BX927152">
    <property type="protein sequence ID" value="CAF21548.1"/>
    <property type="status" value="ALT_INIT"/>
    <property type="molecule type" value="Genomic_DNA"/>
</dbReference>
<dbReference type="RefSeq" id="NP_600755.1">
    <property type="nucleotide sequence ID" value="NC_003450.3"/>
</dbReference>
<dbReference type="SMR" id="Q8NQ98"/>
<dbReference type="STRING" id="196627.cg1737"/>
<dbReference type="KEGG" id="cgb:cg1737"/>
<dbReference type="KEGG" id="cgl:Cgl1540"/>
<dbReference type="PATRIC" id="fig|196627.13.peg.1507"/>
<dbReference type="eggNOG" id="COG1048">
    <property type="taxonomic scope" value="Bacteria"/>
</dbReference>
<dbReference type="HOGENOM" id="CLU_013476_2_1_11"/>
<dbReference type="OrthoDB" id="9764318at2"/>
<dbReference type="BioCyc" id="CORYNE:G18NG-11125-MONOMER"/>
<dbReference type="UniPathway" id="UPA00223">
    <property type="reaction ID" value="UER00718"/>
</dbReference>
<dbReference type="UniPathway" id="UPA00946"/>
<dbReference type="Proteomes" id="UP000000582">
    <property type="component" value="Chromosome"/>
</dbReference>
<dbReference type="Proteomes" id="UP000001009">
    <property type="component" value="Chromosome"/>
</dbReference>
<dbReference type="GO" id="GO:0047456">
    <property type="term" value="F:2-methylisocitrate dehydratase activity"/>
    <property type="evidence" value="ECO:0000250"/>
    <property type="project" value="UniProtKB"/>
</dbReference>
<dbReference type="GO" id="GO:0051539">
    <property type="term" value="F:4 iron, 4 sulfur cluster binding"/>
    <property type="evidence" value="ECO:0000314"/>
    <property type="project" value="UniProtKB"/>
</dbReference>
<dbReference type="GO" id="GO:0003994">
    <property type="term" value="F:aconitate hydratase activity"/>
    <property type="evidence" value="ECO:0000314"/>
    <property type="project" value="UniProtKB"/>
</dbReference>
<dbReference type="GO" id="GO:0046872">
    <property type="term" value="F:metal ion binding"/>
    <property type="evidence" value="ECO:0007669"/>
    <property type="project" value="UniProtKB-KW"/>
</dbReference>
<dbReference type="GO" id="GO:0003730">
    <property type="term" value="F:mRNA 3'-UTR binding"/>
    <property type="evidence" value="ECO:0000250"/>
    <property type="project" value="UniProtKB"/>
</dbReference>
<dbReference type="GO" id="GO:0003729">
    <property type="term" value="F:mRNA binding"/>
    <property type="evidence" value="ECO:0000250"/>
    <property type="project" value="UniProtKB"/>
</dbReference>
<dbReference type="GO" id="GO:0019679">
    <property type="term" value="P:propionate metabolic process, methylcitrate cycle"/>
    <property type="evidence" value="ECO:0000314"/>
    <property type="project" value="UniProtKB"/>
</dbReference>
<dbReference type="GO" id="GO:0006099">
    <property type="term" value="P:tricarboxylic acid cycle"/>
    <property type="evidence" value="ECO:0000314"/>
    <property type="project" value="UniProtKB"/>
</dbReference>
<dbReference type="CDD" id="cd01586">
    <property type="entry name" value="AcnA_IRP"/>
    <property type="match status" value="1"/>
</dbReference>
<dbReference type="CDD" id="cd01580">
    <property type="entry name" value="AcnA_IRP_Swivel"/>
    <property type="match status" value="1"/>
</dbReference>
<dbReference type="FunFam" id="3.20.19.10:FF:000001">
    <property type="entry name" value="Aconitate hydratase"/>
    <property type="match status" value="1"/>
</dbReference>
<dbReference type="FunFam" id="3.30.499.10:FF:000002">
    <property type="entry name" value="Aconitate hydratase"/>
    <property type="match status" value="1"/>
</dbReference>
<dbReference type="FunFam" id="3.30.499.10:FF:000009">
    <property type="entry name" value="Aconitate hydratase"/>
    <property type="match status" value="1"/>
</dbReference>
<dbReference type="Gene3D" id="6.10.190.10">
    <property type="match status" value="1"/>
</dbReference>
<dbReference type="Gene3D" id="3.30.499.10">
    <property type="entry name" value="Aconitase, domain 3"/>
    <property type="match status" value="2"/>
</dbReference>
<dbReference type="Gene3D" id="3.20.19.10">
    <property type="entry name" value="Aconitase, domain 4"/>
    <property type="match status" value="1"/>
</dbReference>
<dbReference type="InterPro" id="IPR044137">
    <property type="entry name" value="AcnA_IRP_Swivel"/>
</dbReference>
<dbReference type="InterPro" id="IPR015931">
    <property type="entry name" value="Acnase/IPM_dHydase_lsu_aba_1/3"/>
</dbReference>
<dbReference type="InterPro" id="IPR001030">
    <property type="entry name" value="Acoase/IPM_deHydtase_lsu_aba"/>
</dbReference>
<dbReference type="InterPro" id="IPR015928">
    <property type="entry name" value="Aconitase/3IPM_dehydase_swvl"/>
</dbReference>
<dbReference type="InterPro" id="IPR006249">
    <property type="entry name" value="Aconitase/IRP2"/>
</dbReference>
<dbReference type="InterPro" id="IPR018136">
    <property type="entry name" value="Aconitase_4Fe-4S_BS"/>
</dbReference>
<dbReference type="InterPro" id="IPR036008">
    <property type="entry name" value="Aconitase_4Fe-4S_dom"/>
</dbReference>
<dbReference type="InterPro" id="IPR000573">
    <property type="entry name" value="AconitaseA/IPMdHydase_ssu_swvl"/>
</dbReference>
<dbReference type="NCBIfam" id="NF006757">
    <property type="entry name" value="PRK09277.1"/>
    <property type="match status" value="1"/>
</dbReference>
<dbReference type="NCBIfam" id="NF009520">
    <property type="entry name" value="PRK12881.1"/>
    <property type="match status" value="1"/>
</dbReference>
<dbReference type="PANTHER" id="PTHR11670">
    <property type="entry name" value="ACONITASE/IRON-RESPONSIVE ELEMENT FAMILY MEMBER"/>
    <property type="match status" value="1"/>
</dbReference>
<dbReference type="Pfam" id="PF00330">
    <property type="entry name" value="Aconitase"/>
    <property type="match status" value="1"/>
</dbReference>
<dbReference type="Pfam" id="PF00694">
    <property type="entry name" value="Aconitase_C"/>
    <property type="match status" value="1"/>
</dbReference>
<dbReference type="PRINTS" id="PR00415">
    <property type="entry name" value="ACONITASE"/>
</dbReference>
<dbReference type="SUPFAM" id="SSF53732">
    <property type="entry name" value="Aconitase iron-sulfur domain"/>
    <property type="match status" value="1"/>
</dbReference>
<dbReference type="SUPFAM" id="SSF52016">
    <property type="entry name" value="LeuD/IlvD-like"/>
    <property type="match status" value="1"/>
</dbReference>
<dbReference type="PROSITE" id="PS00450">
    <property type="entry name" value="ACONITASE_1"/>
    <property type="match status" value="1"/>
</dbReference>
<dbReference type="PROSITE" id="PS01244">
    <property type="entry name" value="ACONITASE_2"/>
    <property type="match status" value="1"/>
</dbReference>
<evidence type="ECO:0000250" key="1">
    <source>
        <dbReference type="UniProtKB" id="P09339"/>
    </source>
</evidence>
<evidence type="ECO:0000250" key="2">
    <source>
        <dbReference type="UniProtKB" id="P36683"/>
    </source>
</evidence>
<evidence type="ECO:0000250" key="3">
    <source>
        <dbReference type="UniProtKB" id="Q8ZP52"/>
    </source>
</evidence>
<evidence type="ECO:0000256" key="4">
    <source>
        <dbReference type="SAM" id="MobiDB-lite"/>
    </source>
</evidence>
<evidence type="ECO:0000269" key="5">
    <source>
    </source>
</evidence>
<evidence type="ECO:0000269" key="6">
    <source>
    </source>
</evidence>
<evidence type="ECO:0000269" key="7">
    <source>
    </source>
</evidence>
<evidence type="ECO:0000269" key="8">
    <source>
    </source>
</evidence>
<evidence type="ECO:0000269" key="9">
    <source>
    </source>
</evidence>
<evidence type="ECO:0000303" key="10">
    <source>
    </source>
</evidence>
<evidence type="ECO:0000305" key="11"/>
<evidence type="ECO:0000305" key="12">
    <source>
    </source>
</evidence>
<keyword id="KW-0408">Iron</keyword>
<keyword id="KW-0411">Iron-sulfur</keyword>
<keyword id="KW-0456">Lyase</keyword>
<keyword id="KW-0479">Metal-binding</keyword>
<keyword id="KW-1185">Reference proteome</keyword>
<keyword id="KW-0694">RNA-binding</keyword>
<keyword id="KW-0816">Tricarboxylic acid cycle</keyword>